<gene>
    <name evidence="1" type="primary">aguA1</name>
    <name type="ordered locus">lmo0038</name>
</gene>
<accession>Q8YAS5</accession>
<organism>
    <name type="scientific">Listeria monocytogenes serovar 1/2a (strain ATCC BAA-679 / EGD-e)</name>
    <dbReference type="NCBI Taxonomy" id="169963"/>
    <lineage>
        <taxon>Bacteria</taxon>
        <taxon>Bacillati</taxon>
        <taxon>Bacillota</taxon>
        <taxon>Bacilli</taxon>
        <taxon>Bacillales</taxon>
        <taxon>Listeriaceae</taxon>
        <taxon>Listeria</taxon>
    </lineage>
</organism>
<proteinExistence type="inferred from homology"/>
<evidence type="ECO:0000255" key="1">
    <source>
        <dbReference type="HAMAP-Rule" id="MF_01841"/>
    </source>
</evidence>
<keyword id="KW-0378">Hydrolase</keyword>
<keyword id="KW-1185">Reference proteome</keyword>
<sequence length="363" mass="40956">MRTIDSSSKKDGFRMPGEFEKHAGCYIIWPERPDNWRLGAKPAQKAFVDVATAISHFEPVTVVASSSQYVNARYMLSDEIRVVEMDNDDAWVRDSGPTFVVNDSGDVRGVDWSFNSWGGLVDGLYFPWDKDDQVAQKICELERKDRYRLADFVLEGGSIHVDGEGTLVTTEECLLSEGRNPQLSKQQIEMVLKEYLNLEKIIWLKRGIYLDETNGHVDNIFNYVRPGVVALAWTDDETDPQYEISKECFDILSNETDAKGRKLEVHKINVPKPILITDEESKGVDAVEGTLPREEGDRLAASYINYYTANGGVIFPLFGDPNDELAREKLQQLYPNCEVVGVKAREILLGGGNIHCITQQVPR</sequence>
<protein>
    <recommendedName>
        <fullName evidence="1">Putative agmatine deiminase 1</fullName>
        <ecNumber evidence="1">3.5.3.12</ecNumber>
    </recommendedName>
    <alternativeName>
        <fullName evidence="1">Agmatine iminohydrolase 1</fullName>
    </alternativeName>
</protein>
<reference key="1">
    <citation type="journal article" date="2001" name="Science">
        <title>Comparative genomics of Listeria species.</title>
        <authorList>
            <person name="Glaser P."/>
            <person name="Frangeul L."/>
            <person name="Buchrieser C."/>
            <person name="Rusniok C."/>
            <person name="Amend A."/>
            <person name="Baquero F."/>
            <person name="Berche P."/>
            <person name="Bloecker H."/>
            <person name="Brandt P."/>
            <person name="Chakraborty T."/>
            <person name="Charbit A."/>
            <person name="Chetouani F."/>
            <person name="Couve E."/>
            <person name="de Daruvar A."/>
            <person name="Dehoux P."/>
            <person name="Domann E."/>
            <person name="Dominguez-Bernal G."/>
            <person name="Duchaud E."/>
            <person name="Durant L."/>
            <person name="Dussurget O."/>
            <person name="Entian K.-D."/>
            <person name="Fsihi H."/>
            <person name="Garcia-del Portillo F."/>
            <person name="Garrido P."/>
            <person name="Gautier L."/>
            <person name="Goebel W."/>
            <person name="Gomez-Lopez N."/>
            <person name="Hain T."/>
            <person name="Hauf J."/>
            <person name="Jackson D."/>
            <person name="Jones L.-M."/>
            <person name="Kaerst U."/>
            <person name="Kreft J."/>
            <person name="Kuhn M."/>
            <person name="Kunst F."/>
            <person name="Kurapkat G."/>
            <person name="Madueno E."/>
            <person name="Maitournam A."/>
            <person name="Mata Vicente J."/>
            <person name="Ng E."/>
            <person name="Nedjari H."/>
            <person name="Nordsiek G."/>
            <person name="Novella S."/>
            <person name="de Pablos B."/>
            <person name="Perez-Diaz J.-C."/>
            <person name="Purcell R."/>
            <person name="Remmel B."/>
            <person name="Rose M."/>
            <person name="Schlueter T."/>
            <person name="Simoes N."/>
            <person name="Tierrez A."/>
            <person name="Vazquez-Boland J.-A."/>
            <person name="Voss H."/>
            <person name="Wehland J."/>
            <person name="Cossart P."/>
        </authorList>
    </citation>
    <scope>NUCLEOTIDE SEQUENCE [LARGE SCALE GENOMIC DNA]</scope>
    <source>
        <strain>ATCC BAA-679 / EGD-e</strain>
    </source>
</reference>
<comment type="catalytic activity">
    <reaction evidence="1">
        <text>agmatine + H2O = N-carbamoylputrescine + NH4(+)</text>
        <dbReference type="Rhea" id="RHEA:18037"/>
        <dbReference type="ChEBI" id="CHEBI:15377"/>
        <dbReference type="ChEBI" id="CHEBI:28938"/>
        <dbReference type="ChEBI" id="CHEBI:58145"/>
        <dbReference type="ChEBI" id="CHEBI:58318"/>
        <dbReference type="EC" id="3.5.3.12"/>
    </reaction>
</comment>
<comment type="similarity">
    <text evidence="1">Belongs to the agmatine deiminase family.</text>
</comment>
<name>AGUA1_LISMO</name>
<feature type="chain" id="PRO_0000194333" description="Putative agmatine deiminase 1">
    <location>
        <begin position="1"/>
        <end position="363"/>
    </location>
</feature>
<feature type="active site" description="Amidino-cysteine intermediate" evidence="1">
    <location>
        <position position="356"/>
    </location>
</feature>
<dbReference type="EC" id="3.5.3.12" evidence="1"/>
<dbReference type="EMBL" id="AL591973">
    <property type="protein sequence ID" value="CAC98253.1"/>
    <property type="molecule type" value="Genomic_DNA"/>
</dbReference>
<dbReference type="PIR" id="AG1079">
    <property type="entry name" value="AG1079"/>
</dbReference>
<dbReference type="RefSeq" id="NP_463571.1">
    <property type="nucleotide sequence ID" value="NC_003210.1"/>
</dbReference>
<dbReference type="SMR" id="Q8YAS5"/>
<dbReference type="STRING" id="169963.gene:17592673"/>
<dbReference type="PaxDb" id="169963-lmo0038"/>
<dbReference type="EnsemblBacteria" id="CAC98253">
    <property type="protein sequence ID" value="CAC98253"/>
    <property type="gene ID" value="CAC98253"/>
</dbReference>
<dbReference type="GeneID" id="985162"/>
<dbReference type="KEGG" id="lmo:lmo0038"/>
<dbReference type="PATRIC" id="fig|169963.11.peg.39"/>
<dbReference type="eggNOG" id="COG2957">
    <property type="taxonomic scope" value="Bacteria"/>
</dbReference>
<dbReference type="HOGENOM" id="CLU_037682_1_0_9"/>
<dbReference type="OrthoDB" id="9808013at2"/>
<dbReference type="PhylomeDB" id="Q8YAS5"/>
<dbReference type="BioCyc" id="LMON169963:LMO0038-MONOMER"/>
<dbReference type="Proteomes" id="UP000000817">
    <property type="component" value="Chromosome"/>
</dbReference>
<dbReference type="GO" id="GO:0047632">
    <property type="term" value="F:agmatine deiminase activity"/>
    <property type="evidence" value="ECO:0007669"/>
    <property type="project" value="UniProtKB-UniRule"/>
</dbReference>
<dbReference type="GO" id="GO:0004668">
    <property type="term" value="F:protein-arginine deiminase activity"/>
    <property type="evidence" value="ECO:0007669"/>
    <property type="project" value="InterPro"/>
</dbReference>
<dbReference type="GO" id="GO:0009446">
    <property type="term" value="P:putrescine biosynthetic process"/>
    <property type="evidence" value="ECO:0007669"/>
    <property type="project" value="InterPro"/>
</dbReference>
<dbReference type="Gene3D" id="3.75.10.10">
    <property type="entry name" value="L-arginine/glycine Amidinotransferase, Chain A"/>
    <property type="match status" value="1"/>
</dbReference>
<dbReference type="HAMAP" id="MF_01841">
    <property type="entry name" value="Agmatine_deimin"/>
    <property type="match status" value="1"/>
</dbReference>
<dbReference type="InterPro" id="IPR017754">
    <property type="entry name" value="Agmatine_deiminase"/>
</dbReference>
<dbReference type="InterPro" id="IPR007466">
    <property type="entry name" value="Peptidyl-Arg-deiminase_porph"/>
</dbReference>
<dbReference type="NCBIfam" id="TIGR03380">
    <property type="entry name" value="agmatine_aguA"/>
    <property type="match status" value="1"/>
</dbReference>
<dbReference type="NCBIfam" id="NF010070">
    <property type="entry name" value="PRK13551.1"/>
    <property type="match status" value="1"/>
</dbReference>
<dbReference type="PANTHER" id="PTHR31377">
    <property type="entry name" value="AGMATINE DEIMINASE-RELATED"/>
    <property type="match status" value="1"/>
</dbReference>
<dbReference type="PANTHER" id="PTHR31377:SF0">
    <property type="entry name" value="AGMATINE DEIMINASE-RELATED"/>
    <property type="match status" value="1"/>
</dbReference>
<dbReference type="Pfam" id="PF04371">
    <property type="entry name" value="PAD_porph"/>
    <property type="match status" value="1"/>
</dbReference>
<dbReference type="SUPFAM" id="SSF55909">
    <property type="entry name" value="Pentein"/>
    <property type="match status" value="1"/>
</dbReference>